<name>ANMK_BACAA</name>
<gene>
    <name evidence="1" type="primary">anmK</name>
    <name type="ordered locus">BAA_2522</name>
</gene>
<proteinExistence type="inferred from homology"/>
<protein>
    <recommendedName>
        <fullName evidence="1">Anhydro-N-acetylmuramic acid kinase</fullName>
        <ecNumber evidence="1">2.7.1.170</ecNumber>
    </recommendedName>
    <alternativeName>
        <fullName evidence="1">AnhMurNAc kinase</fullName>
    </alternativeName>
</protein>
<organism>
    <name type="scientific">Bacillus anthracis (strain A0248)</name>
    <dbReference type="NCBI Taxonomy" id="592021"/>
    <lineage>
        <taxon>Bacteria</taxon>
        <taxon>Bacillati</taxon>
        <taxon>Bacillota</taxon>
        <taxon>Bacilli</taxon>
        <taxon>Bacillales</taxon>
        <taxon>Bacillaceae</taxon>
        <taxon>Bacillus</taxon>
        <taxon>Bacillus cereus group</taxon>
    </lineage>
</organism>
<dbReference type="EC" id="2.7.1.170" evidence="1"/>
<dbReference type="EMBL" id="CP001598">
    <property type="protein sequence ID" value="ACQ47846.1"/>
    <property type="molecule type" value="Genomic_DNA"/>
</dbReference>
<dbReference type="RefSeq" id="WP_000274995.1">
    <property type="nucleotide sequence ID" value="NC_012659.1"/>
</dbReference>
<dbReference type="SMR" id="C3PA65"/>
<dbReference type="GeneID" id="45022336"/>
<dbReference type="KEGG" id="bai:BAA_2522"/>
<dbReference type="HOGENOM" id="CLU_038782_1_0_9"/>
<dbReference type="UniPathway" id="UPA00343"/>
<dbReference type="UniPathway" id="UPA00544"/>
<dbReference type="GO" id="GO:0005524">
    <property type="term" value="F:ATP binding"/>
    <property type="evidence" value="ECO:0007669"/>
    <property type="project" value="UniProtKB-UniRule"/>
</dbReference>
<dbReference type="GO" id="GO:0016301">
    <property type="term" value="F:kinase activity"/>
    <property type="evidence" value="ECO:0007669"/>
    <property type="project" value="UniProtKB-KW"/>
</dbReference>
<dbReference type="GO" id="GO:0016773">
    <property type="term" value="F:phosphotransferase activity, alcohol group as acceptor"/>
    <property type="evidence" value="ECO:0007669"/>
    <property type="project" value="UniProtKB-UniRule"/>
</dbReference>
<dbReference type="GO" id="GO:0097175">
    <property type="term" value="P:1,6-anhydro-N-acetyl-beta-muramic acid catabolic process"/>
    <property type="evidence" value="ECO:0007669"/>
    <property type="project" value="UniProtKB-UniRule"/>
</dbReference>
<dbReference type="GO" id="GO:0006040">
    <property type="term" value="P:amino sugar metabolic process"/>
    <property type="evidence" value="ECO:0007669"/>
    <property type="project" value="InterPro"/>
</dbReference>
<dbReference type="GO" id="GO:0009254">
    <property type="term" value="P:peptidoglycan turnover"/>
    <property type="evidence" value="ECO:0007669"/>
    <property type="project" value="UniProtKB-UniRule"/>
</dbReference>
<dbReference type="CDD" id="cd24050">
    <property type="entry name" value="ASKHA_NBD_ANMK"/>
    <property type="match status" value="1"/>
</dbReference>
<dbReference type="Gene3D" id="3.30.420.40">
    <property type="match status" value="2"/>
</dbReference>
<dbReference type="HAMAP" id="MF_01270">
    <property type="entry name" value="AnhMurNAc_kinase"/>
    <property type="match status" value="1"/>
</dbReference>
<dbReference type="InterPro" id="IPR005338">
    <property type="entry name" value="Anhydro_N_Ac-Mur_kinase"/>
</dbReference>
<dbReference type="InterPro" id="IPR043129">
    <property type="entry name" value="ATPase_NBD"/>
</dbReference>
<dbReference type="NCBIfam" id="NF007142">
    <property type="entry name" value="PRK09585.2-1"/>
    <property type="match status" value="1"/>
</dbReference>
<dbReference type="NCBIfam" id="NF007148">
    <property type="entry name" value="PRK09585.3-2"/>
    <property type="match status" value="1"/>
</dbReference>
<dbReference type="PANTHER" id="PTHR30605">
    <property type="entry name" value="ANHYDRO-N-ACETYLMURAMIC ACID KINASE"/>
    <property type="match status" value="1"/>
</dbReference>
<dbReference type="PANTHER" id="PTHR30605:SF0">
    <property type="entry name" value="ANHYDRO-N-ACETYLMURAMIC ACID KINASE"/>
    <property type="match status" value="1"/>
</dbReference>
<dbReference type="Pfam" id="PF03702">
    <property type="entry name" value="AnmK"/>
    <property type="match status" value="1"/>
</dbReference>
<dbReference type="SUPFAM" id="SSF53067">
    <property type="entry name" value="Actin-like ATPase domain"/>
    <property type="match status" value="1"/>
</dbReference>
<comment type="function">
    <text evidence="1">Catalyzes the specific phosphorylation of 1,6-anhydro-N-acetylmuramic acid (anhMurNAc) with the simultaneous cleavage of the 1,6-anhydro ring, generating MurNAc-6-P. Is required for the utilization of anhMurNAc either imported from the medium or derived from its own cell wall murein, and thus plays a role in cell wall recycling.</text>
</comment>
<comment type="catalytic activity">
    <reaction evidence="1">
        <text>1,6-anhydro-N-acetyl-beta-muramate + ATP + H2O = N-acetyl-D-muramate 6-phosphate + ADP + H(+)</text>
        <dbReference type="Rhea" id="RHEA:24952"/>
        <dbReference type="ChEBI" id="CHEBI:15377"/>
        <dbReference type="ChEBI" id="CHEBI:15378"/>
        <dbReference type="ChEBI" id="CHEBI:30616"/>
        <dbReference type="ChEBI" id="CHEBI:58690"/>
        <dbReference type="ChEBI" id="CHEBI:58722"/>
        <dbReference type="ChEBI" id="CHEBI:456216"/>
        <dbReference type="EC" id="2.7.1.170"/>
    </reaction>
</comment>
<comment type="pathway">
    <text evidence="1">Amino-sugar metabolism; 1,6-anhydro-N-acetylmuramate degradation.</text>
</comment>
<comment type="pathway">
    <text evidence="1">Cell wall biogenesis; peptidoglycan recycling.</text>
</comment>
<comment type="similarity">
    <text evidence="1">Belongs to the anhydro-N-acetylmuramic acid kinase family.</text>
</comment>
<evidence type="ECO:0000255" key="1">
    <source>
        <dbReference type="HAMAP-Rule" id="MF_01270"/>
    </source>
</evidence>
<accession>C3PA65</accession>
<reference key="1">
    <citation type="submission" date="2009-04" db="EMBL/GenBank/DDBJ databases">
        <title>Genome sequence of Bacillus anthracis A0248.</title>
        <authorList>
            <person name="Dodson R.J."/>
            <person name="Munk A.C."/>
            <person name="Bruce D."/>
            <person name="Detter C."/>
            <person name="Tapia R."/>
            <person name="Sutton G."/>
            <person name="Sims D."/>
            <person name="Brettin T."/>
        </authorList>
    </citation>
    <scope>NUCLEOTIDE SEQUENCE [LARGE SCALE GENOMIC DNA]</scope>
    <source>
        <strain>A0248</strain>
    </source>
</reference>
<keyword id="KW-0067">ATP-binding</keyword>
<keyword id="KW-0119">Carbohydrate metabolism</keyword>
<keyword id="KW-0418">Kinase</keyword>
<keyword id="KW-0547">Nucleotide-binding</keyword>
<keyword id="KW-0808">Transferase</keyword>
<sequence length="382" mass="41999">MYIAGVMSGTSLDGIDVALVRIEGSGVESKVELIHFTTVPFCNDIKSEIQQALSIENSNVQLICSLNFKLGLCFANAVKEVCKEANFSLEQLDLIGSHGQTIYHQPKQDGNRIPSTLQIGEPAVIAYETNTTVISNFRTMDMAAGGQGAPLVPYSEVILYRDPSKNRLLQNIGGISNVTVIPNQQSDQNVIAFDTGPGNMIIDEVCQRLFQLSYDQNGEIAKQGRVVDEILTYCMSHPFLKMNPPKSTGREQFGEKFASELLKRFEKHSKENILTTVTMFTANSIVHHYKKFILPYYEIDEVILGGGGSYNSTLVEMLRNGLKDENCAIFIQEDIGYSSEAKEAIAFAILANETHHCNPSNVPSATGAKQSVVFGNITFPPV</sequence>
<feature type="chain" id="PRO_1000214152" description="Anhydro-N-acetylmuramic acid kinase">
    <location>
        <begin position="1"/>
        <end position="382"/>
    </location>
</feature>
<feature type="binding site" evidence="1">
    <location>
        <begin position="9"/>
        <end position="16"/>
    </location>
    <ligand>
        <name>ATP</name>
        <dbReference type="ChEBI" id="CHEBI:30616"/>
    </ligand>
</feature>